<accession>Q0JD42</accession>
<accession>A0A0P0WAQ8</accession>
<accession>Q7XQN8</accession>
<evidence type="ECO:0000250" key="1"/>
<evidence type="ECO:0000255" key="2"/>
<evidence type="ECO:0000255" key="3">
    <source>
        <dbReference type="PROSITE-ProRule" id="PRU00691"/>
    </source>
</evidence>
<evidence type="ECO:0000305" key="4"/>
<reference key="1">
    <citation type="journal article" date="2002" name="Nature">
        <title>Sequence and analysis of rice chromosome 4.</title>
        <authorList>
            <person name="Feng Q."/>
            <person name="Zhang Y."/>
            <person name="Hao P."/>
            <person name="Wang S."/>
            <person name="Fu G."/>
            <person name="Huang Y."/>
            <person name="Li Y."/>
            <person name="Zhu J."/>
            <person name="Liu Y."/>
            <person name="Hu X."/>
            <person name="Jia P."/>
            <person name="Zhang Y."/>
            <person name="Zhao Q."/>
            <person name="Ying K."/>
            <person name="Yu S."/>
            <person name="Tang Y."/>
            <person name="Weng Q."/>
            <person name="Zhang L."/>
            <person name="Lu Y."/>
            <person name="Mu J."/>
            <person name="Lu Y."/>
            <person name="Zhang L.S."/>
            <person name="Yu Z."/>
            <person name="Fan D."/>
            <person name="Liu X."/>
            <person name="Lu T."/>
            <person name="Li C."/>
            <person name="Wu Y."/>
            <person name="Sun T."/>
            <person name="Lei H."/>
            <person name="Li T."/>
            <person name="Hu H."/>
            <person name="Guan J."/>
            <person name="Wu M."/>
            <person name="Zhang R."/>
            <person name="Zhou B."/>
            <person name="Chen Z."/>
            <person name="Chen L."/>
            <person name="Jin Z."/>
            <person name="Wang R."/>
            <person name="Yin H."/>
            <person name="Cai Z."/>
            <person name="Ren S."/>
            <person name="Lv G."/>
            <person name="Gu W."/>
            <person name="Zhu G."/>
            <person name="Tu Y."/>
            <person name="Jia J."/>
            <person name="Zhang Y."/>
            <person name="Chen J."/>
            <person name="Kang H."/>
            <person name="Chen X."/>
            <person name="Shao C."/>
            <person name="Sun Y."/>
            <person name="Hu Q."/>
            <person name="Zhang X."/>
            <person name="Zhang W."/>
            <person name="Wang L."/>
            <person name="Ding C."/>
            <person name="Sheng H."/>
            <person name="Gu J."/>
            <person name="Chen S."/>
            <person name="Ni L."/>
            <person name="Zhu F."/>
            <person name="Chen W."/>
            <person name="Lan L."/>
            <person name="Lai Y."/>
            <person name="Cheng Z."/>
            <person name="Gu M."/>
            <person name="Jiang J."/>
            <person name="Li J."/>
            <person name="Hong G."/>
            <person name="Xue Y."/>
            <person name="Han B."/>
        </authorList>
    </citation>
    <scope>NUCLEOTIDE SEQUENCE [LARGE SCALE GENOMIC DNA]</scope>
    <source>
        <strain>cv. Nipponbare</strain>
    </source>
</reference>
<reference key="2">
    <citation type="journal article" date="2005" name="Nature">
        <title>The map-based sequence of the rice genome.</title>
        <authorList>
            <consortium name="International rice genome sequencing project (IRGSP)"/>
        </authorList>
    </citation>
    <scope>NUCLEOTIDE SEQUENCE [LARGE SCALE GENOMIC DNA]</scope>
    <source>
        <strain>cv. Nipponbare</strain>
    </source>
</reference>
<reference key="3">
    <citation type="journal article" date="2008" name="Nucleic Acids Res.">
        <title>The rice annotation project database (RAP-DB): 2008 update.</title>
        <authorList>
            <consortium name="The rice annotation project (RAP)"/>
        </authorList>
    </citation>
    <scope>GENOME REANNOTATION</scope>
    <source>
        <strain>cv. Nipponbare</strain>
    </source>
</reference>
<reference key="4">
    <citation type="journal article" date="2013" name="Rice">
        <title>Improvement of the Oryza sativa Nipponbare reference genome using next generation sequence and optical map data.</title>
        <authorList>
            <person name="Kawahara Y."/>
            <person name="de la Bastide M."/>
            <person name="Hamilton J.P."/>
            <person name="Kanamori H."/>
            <person name="McCombie W.R."/>
            <person name="Ouyang S."/>
            <person name="Schwartz D.C."/>
            <person name="Tanaka T."/>
            <person name="Wu J."/>
            <person name="Zhou S."/>
            <person name="Childs K.L."/>
            <person name="Davidson R.M."/>
            <person name="Lin H."/>
            <person name="Quesada-Ocampo L."/>
            <person name="Vaillancourt B."/>
            <person name="Sakai H."/>
            <person name="Lee S.S."/>
            <person name="Kim J."/>
            <person name="Numa H."/>
            <person name="Itoh T."/>
            <person name="Buell C.R."/>
            <person name="Matsumoto T."/>
        </authorList>
    </citation>
    <scope>GENOME REANNOTATION</scope>
    <source>
        <strain>cv. Nipponbare</strain>
    </source>
</reference>
<reference key="5">
    <citation type="journal article" date="2003" name="Science">
        <title>Collection, mapping, and annotation of over 28,000 cDNA clones from japonica rice.</title>
        <authorList>
            <consortium name="The rice full-length cDNA consortium"/>
        </authorList>
    </citation>
    <scope>NUCLEOTIDE SEQUENCE [LARGE SCALE MRNA]</scope>
    <source>
        <strain>cv. Nipponbare</strain>
    </source>
</reference>
<reference key="6">
    <citation type="journal article" date="2005" name="Plant Physiol.">
        <title>Phylogenetic analyses identify 10 classes of the protein disulfide isomerase family in plants, including single-domain protein disulfide isomerase-related proteins.</title>
        <authorList>
            <person name="Houston N.L."/>
            <person name="Fan C."/>
            <person name="Xiang J.Q."/>
            <person name="Schulze J.M."/>
            <person name="Jung R."/>
            <person name="Boston R.S."/>
        </authorList>
    </citation>
    <scope>GENE FAMILY</scope>
    <scope>NOMENCLATURE</scope>
</reference>
<reference key="7">
    <citation type="journal article" date="2010" name="BMC Plant Biol.">
        <title>The protein disulfide isomerase gene family in bread wheat (T. aestivum L.).</title>
        <authorList>
            <person name="d'Aloisio E."/>
            <person name="Paolacci A.R."/>
            <person name="Dhanapal A.P."/>
            <person name="Tanzarella O.A."/>
            <person name="Porceddu E."/>
            <person name="Ciaffi M."/>
        </authorList>
    </citation>
    <scope>GENE FAMILY</scope>
    <scope>NOMENCLATURE</scope>
</reference>
<sequence>MAATTTRPLPLLLLLLLPPLLLLLLSFHAAAAAAAEEFPRDGRVIELDESSFEAALGAIDYLFVDFYAPWCGHCKRLAPELDEAAPVLAGLSEPIIVAKVNADKYRKLGSKYGVDGFPTLMLFIHGVPIEYTGSRKADLLVRNLNKFVAPDVSILESDSAIKSFVENAGTSFPMFIGFGVNESLIAGYGGKYKKRAWFAVAKDFSEDFMVTYDFDKVPALVSLHPKYKEQSVFYGPFEGSFLEDFIRQSLLPLTVPINTETLKMLDDDDRKVVLAILEDDSDETSSQLVKVLRSAANANRDLVFGYVGIKQWDEFVETFDISKSSQLPKLIVWDRNEEYEVVEGSEKLEEGDQASQISQFLEGYRAGRTTKKKVSGPSFMGFLNSLVSLNSLYILICVFALLGVMIYFTGQDDTPQVRRAHEE</sequence>
<name>PDI52_ORYSJ</name>
<feature type="signal peptide" evidence="2">
    <location>
        <begin position="1"/>
        <end position="35"/>
    </location>
</feature>
<feature type="chain" id="PRO_0000400037" description="Protein disulfide isomerase-like 5-2">
    <location>
        <begin position="36"/>
        <end position="423"/>
    </location>
</feature>
<feature type="transmembrane region" description="Helical" evidence="2">
    <location>
        <begin position="386"/>
        <end position="406"/>
    </location>
</feature>
<feature type="domain" description="Thioredoxin" evidence="3">
    <location>
        <begin position="36"/>
        <end position="149"/>
    </location>
</feature>
<feature type="active site" description="Nucleophile" evidence="1">
    <location>
        <position position="71"/>
    </location>
</feature>
<feature type="active site" description="Nucleophile" evidence="1">
    <location>
        <position position="74"/>
    </location>
</feature>
<feature type="site" description="Contributes to redox potential value" evidence="1">
    <location>
        <position position="72"/>
    </location>
</feature>
<feature type="site" description="Contributes to redox potential value" evidence="1">
    <location>
        <position position="73"/>
    </location>
</feature>
<feature type="site" description="Lowers pKa of C-terminal Cys of active site" evidence="1">
    <location>
        <position position="135"/>
    </location>
</feature>
<feature type="glycosylation site" description="N-linked (GlcNAc...) asparagine" evidence="2">
    <location>
        <position position="181"/>
    </location>
</feature>
<feature type="disulfide bond" description="Redox-active" evidence="3">
    <location>
        <begin position="71"/>
        <end position="74"/>
    </location>
</feature>
<feature type="sequence conflict" description="In Ref. 5; AK069367." evidence="4" ref="5">
    <original>K</original>
    <variation>E</variation>
    <location>
        <position position="136"/>
    </location>
</feature>
<proteinExistence type="evidence at transcript level"/>
<protein>
    <recommendedName>
        <fullName>Protein disulfide isomerase-like 5-2</fullName>
        <shortName>OsPDIL5-2</shortName>
    </recommendedName>
    <alternativeName>
        <fullName>Protein disulfide isomerase-like 7-1</fullName>
        <shortName>OsPDIL7-1</shortName>
    </alternativeName>
</protein>
<dbReference type="EMBL" id="AL606458">
    <property type="protein sequence ID" value="CAE03042.3"/>
    <property type="status" value="ALT_SEQ"/>
    <property type="molecule type" value="Genomic_DNA"/>
</dbReference>
<dbReference type="EMBL" id="AP008210">
    <property type="protein sequence ID" value="BAF14745.2"/>
    <property type="molecule type" value="Genomic_DNA"/>
</dbReference>
<dbReference type="EMBL" id="AP014960">
    <property type="protein sequence ID" value="BAS89277.1"/>
    <property type="molecule type" value="Genomic_DNA"/>
</dbReference>
<dbReference type="EMBL" id="AK069367">
    <property type="status" value="NOT_ANNOTATED_CDS"/>
    <property type="molecule type" value="mRNA"/>
</dbReference>
<dbReference type="RefSeq" id="XP_015637134.1">
    <property type="nucleotide sequence ID" value="XM_015781648.1"/>
</dbReference>
<dbReference type="SMR" id="Q0JD42"/>
<dbReference type="FunCoup" id="Q0JD42">
    <property type="interactions" value="358"/>
</dbReference>
<dbReference type="STRING" id="39947.Q0JD42"/>
<dbReference type="GlyCosmos" id="Q0JD42">
    <property type="glycosylation" value="1 site, No reported glycans"/>
</dbReference>
<dbReference type="PaxDb" id="39947-Q0JD42"/>
<dbReference type="EnsemblPlants" id="Os04t0432500-01">
    <property type="protein sequence ID" value="Os04t0432500-01"/>
    <property type="gene ID" value="Os04g0432500"/>
</dbReference>
<dbReference type="Gramene" id="Os04t0432500-01">
    <property type="protein sequence ID" value="Os04t0432500-01"/>
    <property type="gene ID" value="Os04g0432500"/>
</dbReference>
<dbReference type="KEGG" id="dosa:Os04g0432500"/>
<dbReference type="eggNOG" id="KOG0190">
    <property type="taxonomic scope" value="Eukaryota"/>
</dbReference>
<dbReference type="HOGENOM" id="CLU_054116_0_0_1"/>
<dbReference type="InParanoid" id="Q0JD42"/>
<dbReference type="OMA" id="GIEMRNM"/>
<dbReference type="OrthoDB" id="74910at2759"/>
<dbReference type="Proteomes" id="UP000000763">
    <property type="component" value="Chromosome 4"/>
</dbReference>
<dbReference type="Proteomes" id="UP000059680">
    <property type="component" value="Chromosome 4"/>
</dbReference>
<dbReference type="ExpressionAtlas" id="Q0JD42">
    <property type="expression patterns" value="baseline and differential"/>
</dbReference>
<dbReference type="GO" id="GO:0005783">
    <property type="term" value="C:endoplasmic reticulum"/>
    <property type="evidence" value="ECO:0000318"/>
    <property type="project" value="GO_Central"/>
</dbReference>
<dbReference type="GO" id="GO:0016020">
    <property type="term" value="C:membrane"/>
    <property type="evidence" value="ECO:0007669"/>
    <property type="project" value="UniProtKB-SubCell"/>
</dbReference>
<dbReference type="GO" id="GO:0003756">
    <property type="term" value="F:protein disulfide isomerase activity"/>
    <property type="evidence" value="ECO:0000318"/>
    <property type="project" value="GO_Central"/>
</dbReference>
<dbReference type="GO" id="GO:0006457">
    <property type="term" value="P:protein folding"/>
    <property type="evidence" value="ECO:0000318"/>
    <property type="project" value="GO_Central"/>
</dbReference>
<dbReference type="GO" id="GO:0034976">
    <property type="term" value="P:response to endoplasmic reticulum stress"/>
    <property type="evidence" value="ECO:0000318"/>
    <property type="project" value="GO_Central"/>
</dbReference>
<dbReference type="CDD" id="cd02961">
    <property type="entry name" value="PDI_a_family"/>
    <property type="match status" value="1"/>
</dbReference>
<dbReference type="FunFam" id="3.40.30.10:FF:000193">
    <property type="entry name" value="Protein disulfide isomerase-like 5-2"/>
    <property type="match status" value="1"/>
</dbReference>
<dbReference type="FunFam" id="3.40.30.10:FF:000107">
    <property type="entry name" value="Protein disulfide-isomerase 5-2"/>
    <property type="match status" value="1"/>
</dbReference>
<dbReference type="Gene3D" id="3.40.30.10">
    <property type="entry name" value="Glutaredoxin"/>
    <property type="match status" value="2"/>
</dbReference>
<dbReference type="InterPro" id="IPR036249">
    <property type="entry name" value="Thioredoxin-like_sf"/>
</dbReference>
<dbReference type="InterPro" id="IPR017937">
    <property type="entry name" value="Thioredoxin_CS"/>
</dbReference>
<dbReference type="InterPro" id="IPR013766">
    <property type="entry name" value="Thioredoxin_domain"/>
</dbReference>
<dbReference type="PANTHER" id="PTHR18929">
    <property type="entry name" value="PROTEIN DISULFIDE ISOMERASE"/>
    <property type="match status" value="1"/>
</dbReference>
<dbReference type="PANTHER" id="PTHR18929:SF218">
    <property type="entry name" value="PROTEIN DISULFIDE-ISOMERASE 5-2"/>
    <property type="match status" value="1"/>
</dbReference>
<dbReference type="Pfam" id="PF00085">
    <property type="entry name" value="Thioredoxin"/>
    <property type="match status" value="1"/>
</dbReference>
<dbReference type="Pfam" id="PF13848">
    <property type="entry name" value="Thioredoxin_6"/>
    <property type="match status" value="1"/>
</dbReference>
<dbReference type="PRINTS" id="PR00421">
    <property type="entry name" value="THIOREDOXIN"/>
</dbReference>
<dbReference type="SUPFAM" id="SSF52833">
    <property type="entry name" value="Thioredoxin-like"/>
    <property type="match status" value="2"/>
</dbReference>
<dbReference type="PROSITE" id="PS00194">
    <property type="entry name" value="THIOREDOXIN_1"/>
    <property type="match status" value="1"/>
</dbReference>
<dbReference type="PROSITE" id="PS51352">
    <property type="entry name" value="THIOREDOXIN_2"/>
    <property type="match status" value="1"/>
</dbReference>
<comment type="function">
    <text evidence="1">Acts as a protein-folding catalyst that interacts with nascent polypeptides to catalyze the formation, isomerization, and reduction or oxidation of disulfide bonds. May play a role in storage protein biogenesis (By similarity).</text>
</comment>
<comment type="subcellular location">
    <subcellularLocation>
        <location evidence="4">Membrane</location>
        <topology evidence="4">Single-pass membrane protein</topology>
    </subcellularLocation>
</comment>
<comment type="similarity">
    <text evidence="4">Belongs to the protein disulfide isomerase family.</text>
</comment>
<comment type="sequence caution" evidence="4">
    <conflict type="erroneous gene model prediction">
        <sequence resource="EMBL-CDS" id="CAE03042"/>
    </conflict>
</comment>
<gene>
    <name type="primary">PDIL5-2</name>
    <name type="synonym">PDIL7-1</name>
    <name type="ordered locus">Os04g0432500</name>
    <name type="ordered locus">LOC_Os04g35290</name>
    <name type="ORF">OSJNBa0084A10.17</name>
</gene>
<organism>
    <name type="scientific">Oryza sativa subsp. japonica</name>
    <name type="common">Rice</name>
    <dbReference type="NCBI Taxonomy" id="39947"/>
    <lineage>
        <taxon>Eukaryota</taxon>
        <taxon>Viridiplantae</taxon>
        <taxon>Streptophyta</taxon>
        <taxon>Embryophyta</taxon>
        <taxon>Tracheophyta</taxon>
        <taxon>Spermatophyta</taxon>
        <taxon>Magnoliopsida</taxon>
        <taxon>Liliopsida</taxon>
        <taxon>Poales</taxon>
        <taxon>Poaceae</taxon>
        <taxon>BOP clade</taxon>
        <taxon>Oryzoideae</taxon>
        <taxon>Oryzeae</taxon>
        <taxon>Oryzinae</taxon>
        <taxon>Oryza</taxon>
        <taxon>Oryza sativa</taxon>
    </lineage>
</organism>
<keyword id="KW-1015">Disulfide bond</keyword>
<keyword id="KW-0325">Glycoprotein</keyword>
<keyword id="KW-0472">Membrane</keyword>
<keyword id="KW-0676">Redox-active center</keyword>
<keyword id="KW-1185">Reference proteome</keyword>
<keyword id="KW-0732">Signal</keyword>
<keyword id="KW-0812">Transmembrane</keyword>
<keyword id="KW-1133">Transmembrane helix</keyword>